<reference key="1">
    <citation type="journal article" date="2005" name="J. Bacteriol.">
        <title>Insights into genome plasticity and pathogenicity of the plant pathogenic Bacterium Xanthomonas campestris pv. vesicatoria revealed by the complete genome sequence.</title>
        <authorList>
            <person name="Thieme F."/>
            <person name="Koebnik R."/>
            <person name="Bekel T."/>
            <person name="Berger C."/>
            <person name="Boch J."/>
            <person name="Buettner D."/>
            <person name="Caldana C."/>
            <person name="Gaigalat L."/>
            <person name="Goesmann A."/>
            <person name="Kay S."/>
            <person name="Kirchner O."/>
            <person name="Lanz C."/>
            <person name="Linke B."/>
            <person name="McHardy A.C."/>
            <person name="Meyer F."/>
            <person name="Mittenhuber G."/>
            <person name="Nies D.H."/>
            <person name="Niesbach-Kloesgen U."/>
            <person name="Patschkowski T."/>
            <person name="Rueckert C."/>
            <person name="Rupp O."/>
            <person name="Schneiker S."/>
            <person name="Schuster S.C."/>
            <person name="Vorhoelter F.J."/>
            <person name="Weber E."/>
            <person name="Puehler A."/>
            <person name="Bonas U."/>
            <person name="Bartels D."/>
            <person name="Kaiser O."/>
        </authorList>
    </citation>
    <scope>NUCLEOTIDE SEQUENCE [LARGE SCALE GENOMIC DNA]</scope>
    <source>
        <strain>85-10</strain>
    </source>
</reference>
<evidence type="ECO:0000255" key="1">
    <source>
        <dbReference type="HAMAP-Rule" id="MF_00233"/>
    </source>
</evidence>
<proteinExistence type="inferred from homology"/>
<comment type="function">
    <text evidence="1">Plays a critical role in the incorporation of lipoproteins in the outer membrane after they are released by the LolA protein.</text>
</comment>
<comment type="subunit">
    <text evidence="1">Monomer.</text>
</comment>
<comment type="subcellular location">
    <subcellularLocation>
        <location evidence="1">Cell outer membrane</location>
        <topology evidence="1">Lipid-anchor</topology>
    </subcellularLocation>
</comment>
<comment type="similarity">
    <text evidence="1">Belongs to the LolB family.</text>
</comment>
<accession>Q3BX04</accession>
<organism>
    <name type="scientific">Xanthomonas euvesicatoria pv. vesicatoria (strain 85-10)</name>
    <name type="common">Xanthomonas campestris pv. vesicatoria</name>
    <dbReference type="NCBI Taxonomy" id="316273"/>
    <lineage>
        <taxon>Bacteria</taxon>
        <taxon>Pseudomonadati</taxon>
        <taxon>Pseudomonadota</taxon>
        <taxon>Gammaproteobacteria</taxon>
        <taxon>Lysobacterales</taxon>
        <taxon>Lysobacteraceae</taxon>
        <taxon>Xanthomonas</taxon>
    </lineage>
</organism>
<feature type="signal peptide" evidence="1">
    <location>
        <begin position="1"/>
        <end position="20"/>
    </location>
</feature>
<feature type="chain" id="PRO_1000021690" description="Outer-membrane lipoprotein LolB">
    <location>
        <begin position="21"/>
        <end position="217"/>
    </location>
</feature>
<feature type="lipid moiety-binding region" description="N-palmitoyl cysteine" evidence="1">
    <location>
        <position position="21"/>
    </location>
</feature>
<feature type="lipid moiety-binding region" description="S-diacylglycerol cysteine" evidence="1">
    <location>
        <position position="21"/>
    </location>
</feature>
<gene>
    <name evidence="1" type="primary">lolB</name>
    <name type="ordered locus">XCV0978</name>
</gene>
<protein>
    <recommendedName>
        <fullName evidence="1">Outer-membrane lipoprotein LolB</fullName>
    </recommendedName>
</protein>
<keyword id="KW-0998">Cell outer membrane</keyword>
<keyword id="KW-0143">Chaperone</keyword>
<keyword id="KW-0449">Lipoprotein</keyword>
<keyword id="KW-0472">Membrane</keyword>
<keyword id="KW-0564">Palmitate</keyword>
<keyword id="KW-0653">Protein transport</keyword>
<keyword id="KW-0732">Signal</keyword>
<keyword id="KW-0813">Transport</keyword>
<dbReference type="EMBL" id="AM039952">
    <property type="protein sequence ID" value="CAJ22609.1"/>
    <property type="molecule type" value="Genomic_DNA"/>
</dbReference>
<dbReference type="RefSeq" id="WP_011346533.1">
    <property type="nucleotide sequence ID" value="NZ_CP017190.1"/>
</dbReference>
<dbReference type="SMR" id="Q3BX04"/>
<dbReference type="STRING" id="456327.BJD11_17870"/>
<dbReference type="KEGG" id="xcv:XCV0978"/>
<dbReference type="eggNOG" id="COG3017">
    <property type="taxonomic scope" value="Bacteria"/>
</dbReference>
<dbReference type="HOGENOM" id="CLU_092816_2_2_6"/>
<dbReference type="Proteomes" id="UP000007069">
    <property type="component" value="Chromosome"/>
</dbReference>
<dbReference type="GO" id="GO:0009279">
    <property type="term" value="C:cell outer membrane"/>
    <property type="evidence" value="ECO:0007669"/>
    <property type="project" value="UniProtKB-SubCell"/>
</dbReference>
<dbReference type="GO" id="GO:0044874">
    <property type="term" value="P:lipoprotein localization to outer membrane"/>
    <property type="evidence" value="ECO:0007669"/>
    <property type="project" value="UniProtKB-UniRule"/>
</dbReference>
<dbReference type="GO" id="GO:0015031">
    <property type="term" value="P:protein transport"/>
    <property type="evidence" value="ECO:0007669"/>
    <property type="project" value="UniProtKB-KW"/>
</dbReference>
<dbReference type="CDD" id="cd16326">
    <property type="entry name" value="LolB"/>
    <property type="match status" value="1"/>
</dbReference>
<dbReference type="Gene3D" id="2.50.20.10">
    <property type="entry name" value="Lipoprotein localisation LolA/LolB/LppX"/>
    <property type="match status" value="1"/>
</dbReference>
<dbReference type="HAMAP" id="MF_00233">
    <property type="entry name" value="LolB"/>
    <property type="match status" value="1"/>
</dbReference>
<dbReference type="InterPro" id="IPR029046">
    <property type="entry name" value="LolA/LolB/LppX"/>
</dbReference>
<dbReference type="InterPro" id="IPR004565">
    <property type="entry name" value="OM_lipoprot_LolB"/>
</dbReference>
<dbReference type="NCBIfam" id="TIGR00548">
    <property type="entry name" value="lolB"/>
    <property type="match status" value="1"/>
</dbReference>
<dbReference type="Pfam" id="PF03550">
    <property type="entry name" value="LolB"/>
    <property type="match status" value="1"/>
</dbReference>
<dbReference type="SUPFAM" id="SSF89392">
    <property type="entry name" value="Prokaryotic lipoproteins and lipoprotein localization factors"/>
    <property type="match status" value="1"/>
</dbReference>
<dbReference type="PROSITE" id="PS51257">
    <property type="entry name" value="PROKAR_LIPOPROTEIN"/>
    <property type="match status" value="1"/>
</dbReference>
<sequence length="217" mass="23189">MSRAVRTLALGGLVLVGLSACVSVPRGQGSGAAVADHVSDSARQAEAARQAWLQAHPNWSFQGRVAISKDRNGGSGRIDWQQDGPRYRVQLSAPVTRQSWVLTGDTTSGAGRLEGLDGGPRSGPDAEQVLLEATGWTIPVNQMPDWVRALRIADAGAARVDLDAAGRPRTAQQDGWTIEFLAWTPAGADQPELPQRIEARNGEAKVRLLVDQWTVSP</sequence>
<name>LOLB_XANE5</name>